<proteinExistence type="evidence at protein level"/>
<organism>
    <name type="scientific">Azospirillum brasilense</name>
    <dbReference type="NCBI Taxonomy" id="192"/>
    <lineage>
        <taxon>Bacteria</taxon>
        <taxon>Pseudomonadati</taxon>
        <taxon>Pseudomonadota</taxon>
        <taxon>Alphaproteobacteria</taxon>
        <taxon>Rhodospirillales</taxon>
        <taxon>Azospirillaceae</taxon>
        <taxon>Azospirillum</taxon>
    </lineage>
</organism>
<comment type="catalytic activity">
    <reaction>
        <text>indole-3-pyruvate + H(+) = indole-3-acetaldehyde + CO2</text>
        <dbReference type="Rhea" id="RHEA:18017"/>
        <dbReference type="ChEBI" id="CHEBI:15378"/>
        <dbReference type="ChEBI" id="CHEBI:16526"/>
        <dbReference type="ChEBI" id="CHEBI:17640"/>
        <dbReference type="ChEBI" id="CHEBI:18086"/>
        <dbReference type="EC" id="4.1.1.74"/>
    </reaction>
</comment>
<comment type="cofactor">
    <cofactor>
        <name>a metal cation</name>
        <dbReference type="ChEBI" id="CHEBI:25213"/>
    </cofactor>
    <text>Binds 1 metal ion per subunit.</text>
</comment>
<comment type="cofactor">
    <cofactor>
        <name>thiamine diphosphate</name>
        <dbReference type="ChEBI" id="CHEBI:58937"/>
    </cofactor>
    <text>Binds 1 thiamine pyrophosphate per subunit.</text>
</comment>
<comment type="pathway">
    <text>Plant hormone metabolism; auxin biosynthesis.</text>
</comment>
<comment type="similarity">
    <text evidence="2">Belongs to the TPP enzyme family.</text>
</comment>
<gene>
    <name type="primary">ipdC</name>
</gene>
<sequence>MKLAEALLRALKDRGAQAMFGIPGDFALPFFKVAEETQILPLHTLSHEPAVGFAADAAARYSSTLGVAAVTYGAGAFNMVNAVAGAYAEKSPVVVISGAPGTTEGNAGLLLHHQGRTLDTQFQVFKEITVAQARLDDPAKAPAEIARVLGAARALSRPVYLEIPRNMVNAEVEPVGDDPAWPVDRDALAACADEVLAAMRSATSPVLMVCVEVRRYGLEAKVAELAQRLGVPVVTTFMGRGLLADAPTPPLGTYIGVAGDAEITRLVEESDGLFLLGAILSDTNFAVSQRKIDLRKTIHAFDRAVTLGYHTYADIPLAGLVDALLEGLPPSDRTTRGKEPHAYPTGLQADGEPIAPMDIARAVNDRVRAGQEPLLIAADMGDCLFTAMDMIDAGLMAPGYYAGMGFGVPAGIGAQCVSGGKRILTVVGDGAFQMTGWELGNCRRLGIDPIVILFNNASWEMLRTFQPESAFNDLDDWRFADMAAGMGGDGVRVRTRAELKAALDKAFATRGRFQLIEAMIPRGVLSDTLARFVQGQKRLHAAPRE</sequence>
<keyword id="KW-0002">3D-structure</keyword>
<keyword id="KW-0210">Decarboxylase</keyword>
<keyword id="KW-0456">Lyase</keyword>
<keyword id="KW-0460">Magnesium</keyword>
<keyword id="KW-0479">Metal-binding</keyword>
<keyword id="KW-0786">Thiamine pyrophosphate</keyword>
<evidence type="ECO:0000250" key="1"/>
<evidence type="ECO:0000305" key="2"/>
<evidence type="ECO:0007829" key="3">
    <source>
        <dbReference type="PDB" id="2NXW"/>
    </source>
</evidence>
<evidence type="ECO:0007829" key="4">
    <source>
        <dbReference type="PDB" id="2Q5J"/>
    </source>
</evidence>
<evidence type="ECO:0007829" key="5">
    <source>
        <dbReference type="PDB" id="2Q5Q"/>
    </source>
</evidence>
<protein>
    <recommendedName>
        <fullName>Indole-3-pyruvate decarboxylase</fullName>
        <shortName>Indolepyruvate decarboxylase</shortName>
        <ecNumber>4.1.1.74</ecNumber>
    </recommendedName>
</protein>
<accession>P51852</accession>
<reference key="1">
    <citation type="journal article" date="1994" name="Mol. Gen. Genet.">
        <title>Molecular cloning and sequence analysis of an Azospirillum brasilense indole-3-pyruvate decarboxylase gene.</title>
        <authorList>
            <person name="Costacurta A."/>
            <person name="Keijers V."/>
            <person name="Vanderleyden J."/>
        </authorList>
    </citation>
    <scope>NUCLEOTIDE SEQUENCE [GENOMIC DNA]</scope>
    <source>
        <strain>Sp245</strain>
    </source>
</reference>
<feature type="chain" id="PRO_0000090821" description="Indole-3-pyruvate decarboxylase">
    <location>
        <begin position="1"/>
        <end position="545"/>
    </location>
</feature>
<feature type="region of interest" description="Thiamine pyrophosphate binding">
    <location>
        <begin position="382"/>
        <end position="460"/>
    </location>
</feature>
<feature type="binding site" evidence="1">
    <location>
        <position position="48"/>
    </location>
    <ligand>
        <name>thiamine diphosphate</name>
        <dbReference type="ChEBI" id="CHEBI:58937"/>
    </ligand>
</feature>
<feature type="binding site" evidence="1">
    <location>
        <position position="429"/>
    </location>
    <ligand>
        <name>Mg(2+)</name>
        <dbReference type="ChEBI" id="CHEBI:18420"/>
    </ligand>
</feature>
<feature type="binding site" evidence="1">
    <location>
        <position position="456"/>
    </location>
    <ligand>
        <name>Mg(2+)</name>
        <dbReference type="ChEBI" id="CHEBI:18420"/>
    </ligand>
</feature>
<feature type="helix" evidence="3">
    <location>
        <begin position="3"/>
        <end position="13"/>
    </location>
</feature>
<feature type="strand" evidence="3">
    <location>
        <begin position="19"/>
        <end position="21"/>
    </location>
</feature>
<feature type="helix" evidence="3">
    <location>
        <begin position="25"/>
        <end position="27"/>
    </location>
</feature>
<feature type="helix" evidence="3">
    <location>
        <begin position="28"/>
        <end position="37"/>
    </location>
</feature>
<feature type="strand" evidence="3">
    <location>
        <begin position="42"/>
        <end position="44"/>
    </location>
</feature>
<feature type="helix" evidence="3">
    <location>
        <begin position="48"/>
        <end position="62"/>
    </location>
</feature>
<feature type="strand" evidence="3">
    <location>
        <begin position="66"/>
        <end position="70"/>
    </location>
</feature>
<feature type="helix" evidence="3">
    <location>
        <begin position="74"/>
        <end position="77"/>
    </location>
</feature>
<feature type="helix" evidence="3">
    <location>
        <begin position="80"/>
        <end position="88"/>
    </location>
</feature>
<feature type="strand" evidence="3">
    <location>
        <begin position="93"/>
        <end position="99"/>
    </location>
</feature>
<feature type="turn" evidence="5">
    <location>
        <begin position="102"/>
        <end position="105"/>
    </location>
</feature>
<feature type="helix" evidence="3">
    <location>
        <begin position="120"/>
        <end position="125"/>
    </location>
</feature>
<feature type="helix" evidence="4">
    <location>
        <begin position="126"/>
        <end position="128"/>
    </location>
</feature>
<feature type="strand" evidence="3">
    <location>
        <begin position="132"/>
        <end position="134"/>
    </location>
</feature>
<feature type="turn" evidence="3">
    <location>
        <begin position="138"/>
        <end position="140"/>
    </location>
</feature>
<feature type="helix" evidence="3">
    <location>
        <begin position="141"/>
        <end position="155"/>
    </location>
</feature>
<feature type="strand" evidence="3">
    <location>
        <begin position="159"/>
        <end position="164"/>
    </location>
</feature>
<feature type="helix" evidence="3">
    <location>
        <begin position="165"/>
        <end position="167"/>
    </location>
</feature>
<feature type="helix" evidence="3">
    <location>
        <begin position="185"/>
        <end position="201"/>
    </location>
</feature>
<feature type="strand" evidence="3">
    <location>
        <begin position="203"/>
        <end position="209"/>
    </location>
</feature>
<feature type="helix" evidence="3">
    <location>
        <begin position="211"/>
        <end position="215"/>
    </location>
</feature>
<feature type="helix" evidence="3">
    <location>
        <begin position="219"/>
        <end position="229"/>
    </location>
</feature>
<feature type="strand" evidence="3">
    <location>
        <begin position="233"/>
        <end position="235"/>
    </location>
</feature>
<feature type="helix" evidence="3">
    <location>
        <begin position="237"/>
        <end position="239"/>
    </location>
</feature>
<feature type="turn" evidence="3">
    <location>
        <begin position="240"/>
        <end position="245"/>
    </location>
</feature>
<feature type="strand" evidence="3">
    <location>
        <begin position="246"/>
        <end position="248"/>
    </location>
</feature>
<feature type="strand" evidence="5">
    <location>
        <begin position="251"/>
        <end position="253"/>
    </location>
</feature>
<feature type="helix" evidence="3">
    <location>
        <begin position="256"/>
        <end position="258"/>
    </location>
</feature>
<feature type="helix" evidence="3">
    <location>
        <begin position="261"/>
        <end position="268"/>
    </location>
</feature>
<feature type="strand" evidence="3">
    <location>
        <begin position="271"/>
        <end position="277"/>
    </location>
</feature>
<feature type="helix" evidence="5">
    <location>
        <begin position="282"/>
        <end position="285"/>
    </location>
</feature>
<feature type="turn" evidence="3">
    <location>
        <begin position="289"/>
        <end position="291"/>
    </location>
</feature>
<feature type="helix" evidence="3">
    <location>
        <begin position="294"/>
        <end position="296"/>
    </location>
</feature>
<feature type="strand" evidence="3">
    <location>
        <begin position="297"/>
        <end position="301"/>
    </location>
</feature>
<feature type="strand" evidence="3">
    <location>
        <begin position="304"/>
        <end position="307"/>
    </location>
</feature>
<feature type="strand" evidence="3">
    <location>
        <begin position="310"/>
        <end position="314"/>
    </location>
</feature>
<feature type="helix" evidence="3">
    <location>
        <begin position="317"/>
        <end position="326"/>
    </location>
</feature>
<feature type="strand" evidence="3">
    <location>
        <begin position="350"/>
        <end position="353"/>
    </location>
</feature>
<feature type="helix" evidence="3">
    <location>
        <begin position="356"/>
        <end position="368"/>
    </location>
</feature>
<feature type="strand" evidence="3">
    <location>
        <begin position="375"/>
        <end position="378"/>
    </location>
</feature>
<feature type="helix" evidence="3">
    <location>
        <begin position="382"/>
        <end position="387"/>
    </location>
</feature>
<feature type="turn" evidence="3">
    <location>
        <begin position="399"/>
        <end position="401"/>
    </location>
</feature>
<feature type="helix" evidence="3">
    <location>
        <begin position="407"/>
        <end position="417"/>
    </location>
</feature>
<feature type="turn" evidence="3">
    <location>
        <begin position="418"/>
        <end position="420"/>
    </location>
</feature>
<feature type="strand" evidence="3">
    <location>
        <begin position="423"/>
        <end position="428"/>
    </location>
</feature>
<feature type="helix" evidence="3">
    <location>
        <begin position="429"/>
        <end position="435"/>
    </location>
</feature>
<feature type="helix" evidence="3">
    <location>
        <begin position="436"/>
        <end position="441"/>
    </location>
</feature>
<feature type="helix" evidence="3">
    <location>
        <begin position="442"/>
        <end position="445"/>
    </location>
</feature>
<feature type="strand" evidence="3">
    <location>
        <begin position="450"/>
        <end position="455"/>
    </location>
</feature>
<feature type="helix" evidence="3">
    <location>
        <begin position="460"/>
        <end position="465"/>
    </location>
</feature>
<feature type="helix" evidence="3">
    <location>
        <begin position="470"/>
        <end position="472"/>
    </location>
</feature>
<feature type="helix" evidence="3">
    <location>
        <begin position="479"/>
        <end position="482"/>
    </location>
</feature>
<feature type="helix" evidence="3">
    <location>
        <begin position="484"/>
        <end position="486"/>
    </location>
</feature>
<feature type="strand" evidence="3">
    <location>
        <begin position="488"/>
        <end position="493"/>
    </location>
</feature>
<feature type="helix" evidence="3">
    <location>
        <begin position="496"/>
        <end position="508"/>
    </location>
</feature>
<feature type="strand" evidence="3">
    <location>
        <begin position="514"/>
        <end position="519"/>
    </location>
</feature>
<feature type="helix" evidence="3">
    <location>
        <begin position="527"/>
        <end position="538"/>
    </location>
</feature>
<name>DCIP_AZOBR</name>
<dbReference type="EC" id="4.1.1.74"/>
<dbReference type="EMBL" id="L26240">
    <property type="protein sequence ID" value="AAC36886.1"/>
    <property type="molecule type" value="Unassigned_DNA"/>
</dbReference>
<dbReference type="PIR" id="S44486">
    <property type="entry name" value="S44486"/>
</dbReference>
<dbReference type="PDB" id="2NXW">
    <property type="method" value="X-ray"/>
    <property type="resolution" value="1.50 A"/>
    <property type="chains" value="A/B=1-545"/>
</dbReference>
<dbReference type="PDB" id="2Q5J">
    <property type="method" value="X-ray"/>
    <property type="resolution" value="3.20 A"/>
    <property type="chains" value="A/B=1-545"/>
</dbReference>
<dbReference type="PDB" id="2Q5L">
    <property type="method" value="X-ray"/>
    <property type="resolution" value="1.85 A"/>
    <property type="chains" value="A/B=1-545"/>
</dbReference>
<dbReference type="PDB" id="2Q5O">
    <property type="method" value="X-ray"/>
    <property type="resolution" value="2.15 A"/>
    <property type="chains" value="A/B=1-545"/>
</dbReference>
<dbReference type="PDB" id="2Q5Q">
    <property type="method" value="X-ray"/>
    <property type="resolution" value="1.90 A"/>
    <property type="chains" value="A/B=1-545"/>
</dbReference>
<dbReference type="PDBsum" id="2NXW"/>
<dbReference type="PDBsum" id="2Q5J"/>
<dbReference type="PDBsum" id="2Q5L"/>
<dbReference type="PDBsum" id="2Q5O"/>
<dbReference type="PDBsum" id="2Q5Q"/>
<dbReference type="SMR" id="P51852"/>
<dbReference type="DrugBank" id="DB08050">
    <property type="generic name" value="5-phenyl-2-keto-valeric acid"/>
</dbReference>
<dbReference type="DrugBank" id="DB03884">
    <property type="generic name" value="Phenylpyruvic acid"/>
</dbReference>
<dbReference type="BioCyc" id="MetaCyc:MONOMER-20681"/>
<dbReference type="BRENDA" id="4.1.1.74">
    <property type="organism ID" value="611"/>
</dbReference>
<dbReference type="UniPathway" id="UPA00151"/>
<dbReference type="EvolutionaryTrace" id="P51852"/>
<dbReference type="GO" id="GO:0005829">
    <property type="term" value="C:cytosol"/>
    <property type="evidence" value="ECO:0007669"/>
    <property type="project" value="TreeGrafter"/>
</dbReference>
<dbReference type="GO" id="GO:0047434">
    <property type="term" value="F:indolepyruvate decarboxylase activity"/>
    <property type="evidence" value="ECO:0007669"/>
    <property type="project" value="UniProtKB-EC"/>
</dbReference>
<dbReference type="GO" id="GO:0000287">
    <property type="term" value="F:magnesium ion binding"/>
    <property type="evidence" value="ECO:0007669"/>
    <property type="project" value="InterPro"/>
</dbReference>
<dbReference type="GO" id="GO:0004737">
    <property type="term" value="F:pyruvate decarboxylase activity"/>
    <property type="evidence" value="ECO:0007669"/>
    <property type="project" value="TreeGrafter"/>
</dbReference>
<dbReference type="GO" id="GO:0030976">
    <property type="term" value="F:thiamine pyrophosphate binding"/>
    <property type="evidence" value="ECO:0007669"/>
    <property type="project" value="InterPro"/>
</dbReference>
<dbReference type="GO" id="GO:0000949">
    <property type="term" value="P:aromatic amino acid family catabolic process to alcohol via Ehrlich pathway"/>
    <property type="evidence" value="ECO:0007669"/>
    <property type="project" value="TreeGrafter"/>
</dbReference>
<dbReference type="GO" id="GO:0009851">
    <property type="term" value="P:auxin biosynthetic process"/>
    <property type="evidence" value="ECO:0007669"/>
    <property type="project" value="UniProtKB-UniPathway"/>
</dbReference>
<dbReference type="CDD" id="cd07038">
    <property type="entry name" value="TPP_PYR_PDC_IPDC_like"/>
    <property type="match status" value="1"/>
</dbReference>
<dbReference type="Gene3D" id="3.40.50.970">
    <property type="match status" value="2"/>
</dbReference>
<dbReference type="Gene3D" id="3.40.50.1220">
    <property type="entry name" value="TPP-binding domain"/>
    <property type="match status" value="1"/>
</dbReference>
<dbReference type="InterPro" id="IPR029035">
    <property type="entry name" value="DHS-like_NAD/FAD-binding_dom"/>
</dbReference>
<dbReference type="InterPro" id="IPR017765">
    <property type="entry name" value="IPDC"/>
</dbReference>
<dbReference type="InterPro" id="IPR012110">
    <property type="entry name" value="PDC/IPDC-like"/>
</dbReference>
<dbReference type="InterPro" id="IPR029061">
    <property type="entry name" value="THDP-binding"/>
</dbReference>
<dbReference type="InterPro" id="IPR012000">
    <property type="entry name" value="Thiamin_PyroP_enz_cen_dom"/>
</dbReference>
<dbReference type="InterPro" id="IPR012001">
    <property type="entry name" value="Thiamin_PyroP_enz_TPP-bd_dom"/>
</dbReference>
<dbReference type="InterPro" id="IPR011766">
    <property type="entry name" value="TPP_enzyme_TPP-bd"/>
</dbReference>
<dbReference type="InterPro" id="IPR047213">
    <property type="entry name" value="TPP_PYR_PDC_IPDC-like"/>
</dbReference>
<dbReference type="NCBIfam" id="TIGR03394">
    <property type="entry name" value="indol_phenyl_DC"/>
    <property type="match status" value="1"/>
</dbReference>
<dbReference type="PANTHER" id="PTHR43452">
    <property type="entry name" value="PYRUVATE DECARBOXYLASE"/>
    <property type="match status" value="1"/>
</dbReference>
<dbReference type="PANTHER" id="PTHR43452:SF30">
    <property type="entry name" value="PYRUVATE DECARBOXYLASE ISOZYME 1-RELATED"/>
    <property type="match status" value="1"/>
</dbReference>
<dbReference type="Pfam" id="PF02775">
    <property type="entry name" value="TPP_enzyme_C"/>
    <property type="match status" value="1"/>
</dbReference>
<dbReference type="Pfam" id="PF00205">
    <property type="entry name" value="TPP_enzyme_M"/>
    <property type="match status" value="1"/>
</dbReference>
<dbReference type="Pfam" id="PF02776">
    <property type="entry name" value="TPP_enzyme_N"/>
    <property type="match status" value="1"/>
</dbReference>
<dbReference type="PIRSF" id="PIRSF036565">
    <property type="entry name" value="Pyruvt_ip_decrb"/>
    <property type="match status" value="1"/>
</dbReference>
<dbReference type="SUPFAM" id="SSF52467">
    <property type="entry name" value="DHS-like NAD/FAD-binding domain"/>
    <property type="match status" value="1"/>
</dbReference>
<dbReference type="SUPFAM" id="SSF52518">
    <property type="entry name" value="Thiamin diphosphate-binding fold (THDP-binding)"/>
    <property type="match status" value="2"/>
</dbReference>